<dbReference type="EMBL" id="AY050652">
    <property type="protein sequence ID" value="AAL25936.1"/>
    <property type="molecule type" value="mRNA"/>
</dbReference>
<dbReference type="RefSeq" id="XP_001704056.1">
    <property type="nucleotide sequence ID" value="XM_001704004.1"/>
</dbReference>
<dbReference type="SMR" id="Q8ISM1"/>
<dbReference type="KEGG" id="gla:GL50803_008035"/>
<dbReference type="VEuPathDB" id="GiardiaDB:DHA2_8035"/>
<dbReference type="VEuPathDB" id="GiardiaDB:GL50581_1978"/>
<dbReference type="VEuPathDB" id="GiardiaDB:GL50803_008035"/>
<dbReference type="VEuPathDB" id="GiardiaDB:QR46_3767"/>
<dbReference type="OrthoDB" id="5571054at2759"/>
<dbReference type="GO" id="GO:0031965">
    <property type="term" value="C:nuclear membrane"/>
    <property type="evidence" value="ECO:0000314"/>
    <property type="project" value="UniProtKB"/>
</dbReference>
<dbReference type="GO" id="GO:0005730">
    <property type="term" value="C:nucleolus"/>
    <property type="evidence" value="ECO:0000250"/>
    <property type="project" value="UniProtKB"/>
</dbReference>
<dbReference type="GO" id="GO:0005634">
    <property type="term" value="C:nucleus"/>
    <property type="evidence" value="ECO:0000314"/>
    <property type="project" value="UniProtKB"/>
</dbReference>
<dbReference type="GO" id="GO:0070545">
    <property type="term" value="C:PeBoW complex"/>
    <property type="evidence" value="ECO:0007669"/>
    <property type="project" value="TreeGrafter"/>
</dbReference>
<dbReference type="GO" id="GO:0030687">
    <property type="term" value="C:preribosome, large subunit precursor"/>
    <property type="evidence" value="ECO:0007669"/>
    <property type="project" value="UniProtKB-UniRule"/>
</dbReference>
<dbReference type="GO" id="GO:0043021">
    <property type="term" value="F:ribonucleoprotein complex binding"/>
    <property type="evidence" value="ECO:0007669"/>
    <property type="project" value="UniProtKB-UniRule"/>
</dbReference>
<dbReference type="GO" id="GO:0000460">
    <property type="term" value="P:maturation of 5.8S rRNA"/>
    <property type="evidence" value="ECO:0000250"/>
    <property type="project" value="UniProtKB"/>
</dbReference>
<dbReference type="GO" id="GO:0000466">
    <property type="term" value="P:maturation of 5.8S rRNA from tricistronic rRNA transcript (SSU-rRNA, 5.8S rRNA, LSU-rRNA)"/>
    <property type="evidence" value="ECO:0007669"/>
    <property type="project" value="UniProtKB-UniRule"/>
</dbReference>
<dbReference type="GO" id="GO:0000463">
    <property type="term" value="P:maturation of LSU-rRNA from tricistronic rRNA transcript (SSU-rRNA, 5.8S rRNA, LSU-rRNA)"/>
    <property type="evidence" value="ECO:0007669"/>
    <property type="project" value="UniProtKB-UniRule"/>
</dbReference>
<dbReference type="GO" id="GO:0042273">
    <property type="term" value="P:ribosomal large subunit biogenesis"/>
    <property type="evidence" value="ECO:0000250"/>
    <property type="project" value="UniProtKB"/>
</dbReference>
<dbReference type="Gene3D" id="2.130.10.10">
    <property type="entry name" value="YVTN repeat-like/Quinoprotein amine dehydrogenase"/>
    <property type="match status" value="1"/>
</dbReference>
<dbReference type="HAMAP" id="MF_03027">
    <property type="entry name" value="BOP1"/>
    <property type="match status" value="1"/>
</dbReference>
<dbReference type="InterPro" id="IPR028598">
    <property type="entry name" value="BOP1/Erb1"/>
</dbReference>
<dbReference type="InterPro" id="IPR012953">
    <property type="entry name" value="BOP1_N_dom"/>
</dbReference>
<dbReference type="InterPro" id="IPR015943">
    <property type="entry name" value="WD40/YVTN_repeat-like_dom_sf"/>
</dbReference>
<dbReference type="InterPro" id="IPR036322">
    <property type="entry name" value="WD40_repeat_dom_sf"/>
</dbReference>
<dbReference type="InterPro" id="IPR001680">
    <property type="entry name" value="WD40_rpt"/>
</dbReference>
<dbReference type="PANTHER" id="PTHR17605:SF0">
    <property type="entry name" value="RIBOSOME BIOGENESIS PROTEIN BOP1"/>
    <property type="match status" value="1"/>
</dbReference>
<dbReference type="PANTHER" id="PTHR17605">
    <property type="entry name" value="RIBOSOME BIOGENESIS PROTEIN BOP1 BLOCK OF PROLIFERATION 1 PROTEIN"/>
    <property type="match status" value="1"/>
</dbReference>
<dbReference type="Pfam" id="PF08145">
    <property type="entry name" value="BOP1NT"/>
    <property type="match status" value="1"/>
</dbReference>
<dbReference type="Pfam" id="PF00400">
    <property type="entry name" value="WD40"/>
    <property type="match status" value="3"/>
</dbReference>
<dbReference type="SMART" id="SM01035">
    <property type="entry name" value="BOP1NT"/>
    <property type="match status" value="1"/>
</dbReference>
<dbReference type="SMART" id="SM00320">
    <property type="entry name" value="WD40"/>
    <property type="match status" value="6"/>
</dbReference>
<dbReference type="SUPFAM" id="SSF50978">
    <property type="entry name" value="WD40 repeat-like"/>
    <property type="match status" value="1"/>
</dbReference>
<organism evidence="10">
    <name type="scientific">Giardia intestinalis</name>
    <name type="common">Giardia lamblia</name>
    <dbReference type="NCBI Taxonomy" id="5741"/>
    <lineage>
        <taxon>Eukaryota</taxon>
        <taxon>Metamonada</taxon>
        <taxon>Diplomonadida</taxon>
        <taxon>Hexamitidae</taxon>
        <taxon>Giardiinae</taxon>
        <taxon>Giardia</taxon>
    </lineage>
</organism>
<gene>
    <name evidence="7 8" type="primary">bop1</name>
</gene>
<accession>Q8ISM1</accession>
<accession>A8BZ91</accession>
<sequence>MSQEPSSSFSDGFMESDFSQGSFSASDDAELSIPSEFAESVDELSSSSDNGDQGQPLTEPNNIPIDEDTVYNIWGQVVGTRRKDIGPDGSSLDMFLERHKDTNEFFRTVYDPAKGYKRANLTPEEEEMIRNVMVSRPYNDAPGLSRMNIQSTLVNKNIMRTALTSDIVGPKEKYASKAIVRKIEKLREGIERGEIVYDPNRYKVDENRGLVVGNRDLWADVDETEDPSMRIPKGRGEMYMNPTKPKLPGHALSYNPPLEYLNIDGDGSQQKLQSLRQIKTYTNFVKDQFDRCVTLYLNPRQRLRKEEDMDSMLPTLPNRSLLTPYPTFCAMTIRTGTRRINGLTFSPKGMFFAVGGRDCILRVFETYSGRQVRAIPVLSTKKLEKKSINFLNLEINCCKWCPRTDVSIIAVCAGDELIFVDAGICESGNYNEVRERTRFLLNARPETTQPCPHMAWEMHAGVTSGGKSYASGFVTQVSSNAYNEGSEDDDAAESARFNEERHQRGHEGQIDADVYTVYTRLNQFVLLRIHHTHLVSFCNWHFQGDYIVTVCTDDKSRAKVTLHQLSKWHSLSPFNRLKSKIIGAHFRTKKSELIVVSERSSRIYNLLTGDKLSTLYPGVKQVTASGMGYGDNFITGSADSQCALFANAAGPEPTAKLCYHTSTIRNIDVHPCGGLVATCSDDGIVQISRIVDASLVKMHPGQFDEKLYNRMIPCVVLNRRRQAADGSVGISRVTWHPRQPWLLCSGTDGVLRLFK</sequence>
<comment type="function">
    <text evidence="1">Required for maturation of ribosomal RNAs and formation of the large ribosomal subunit.</text>
</comment>
<comment type="subunit">
    <text evidence="5 6">Interacts (via C-terminal WD repeats) with giardin subunit beta (PubMed:16362343). Interacts (via C-terminal WD repeats) with EB1 (PubMed:18670790).</text>
</comment>
<comment type="subcellular location">
    <subcellularLocation>
        <location evidence="6">Nucleus</location>
    </subcellularLocation>
    <subcellularLocation>
        <location evidence="2">Nucleus</location>
        <location evidence="2">Nucleolus</location>
    </subcellularLocation>
    <subcellularLocation>
        <location evidence="6">Nucleus membrane</location>
    </subcellularLocation>
    <text evidence="6">Localizes mainly to the nuclear membrane. Speckled localization in the nuclei.</text>
</comment>
<comment type="induction">
    <text evidence="5 6">Expression remains constant in trophozoites and in encysting cells.</text>
</comment>
<comment type="similarity">
    <text evidence="9">Belongs to the WD repeat BOP1/ERB1 family.</text>
</comment>
<protein>
    <recommendedName>
        <fullName evidence="8">Ribosome biogenesis protein BOP1</fullName>
    </recommendedName>
    <alternativeName>
        <fullName evidence="7 8">Block of proliferation 1 protein</fullName>
    </alternativeName>
</protein>
<reference evidence="10" key="1">
    <citation type="journal article" date="2006" name="Parasitol. Res.">
        <title>Interaction of beta-giardin with the Bop1 protein in Giardia lamblia.</title>
        <authorList>
            <person name="Kim J."/>
            <person name="Goo S.Y."/>
            <person name="Chung H.J."/>
            <person name="Yang H.W."/>
            <person name="Yong T.S."/>
            <person name="Lee K.H."/>
            <person name="Park S.J."/>
        </authorList>
    </citation>
    <scope>NUCLEOTIDE SEQUENCE [MRNA]</scope>
    <scope>INTERACTION WITH GIARDIN SUBUNIT BETA</scope>
    <scope>INDUCTION</scope>
    <source>
        <strain evidence="7 10">ATCC 30957 / WB</strain>
    </source>
</reference>
<reference key="2">
    <citation type="journal article" date="2008" name="Parasitol. Res.">
        <title>Interaction of BOP1, a protein for ribosome biogenesis, with EB1 in Giardia lamblia.</title>
        <authorList>
            <person name="Kim J."/>
            <person name="Sim S."/>
            <person name="Yong T.S."/>
            <person name="Park S.J."/>
        </authorList>
    </citation>
    <scope>INTERACTION WITH EB1</scope>
    <scope>SUBCELLULAR LOCATION</scope>
    <scope>INDUCTION</scope>
    <scope>REGION</scope>
    <scope>MUTAGENESIS OF 1-MET--ASP-308 AND LYS-755</scope>
    <source>
        <strain evidence="6">ATCC 30957 / WB</strain>
    </source>
</reference>
<evidence type="ECO:0000250" key="1">
    <source>
        <dbReference type="UniProtKB" id="P97452"/>
    </source>
</evidence>
<evidence type="ECO:0000250" key="2">
    <source>
        <dbReference type="UniProtKB" id="Q14137"/>
    </source>
</evidence>
<evidence type="ECO:0000255" key="3"/>
<evidence type="ECO:0000256" key="4">
    <source>
        <dbReference type="SAM" id="MobiDB-lite"/>
    </source>
</evidence>
<evidence type="ECO:0000269" key="5">
    <source>
    </source>
</evidence>
<evidence type="ECO:0000269" key="6">
    <source>
    </source>
</evidence>
<evidence type="ECO:0000303" key="7">
    <source>
    </source>
</evidence>
<evidence type="ECO:0000303" key="8">
    <source>
    </source>
</evidence>
<evidence type="ECO:0000305" key="9"/>
<evidence type="ECO:0000312" key="10">
    <source>
        <dbReference type="EMBL" id="AAL25936.1"/>
    </source>
</evidence>
<feature type="chain" id="PRO_0000459109" description="Ribosome biogenesis protein BOP1">
    <location>
        <begin position="1"/>
        <end position="755"/>
    </location>
</feature>
<feature type="repeat" description="WD 1" evidence="3">
    <location>
        <begin position="335"/>
        <end position="374"/>
    </location>
</feature>
<feature type="repeat" description="WD 2" evidence="3">
    <location>
        <begin position="617"/>
        <end position="655"/>
    </location>
</feature>
<feature type="repeat" description="WD 3" evidence="3">
    <location>
        <begin position="659"/>
        <end position="698"/>
    </location>
</feature>
<feature type="repeat" description="WD 4" evidence="3">
    <location>
        <begin position="725"/>
        <end position="755"/>
    </location>
</feature>
<feature type="region of interest" description="Disordered" evidence="4">
    <location>
        <begin position="1"/>
        <end position="65"/>
    </location>
</feature>
<feature type="region of interest" description="Interaction with EB1" evidence="6">
    <location>
        <begin position="309"/>
        <end position="754"/>
    </location>
</feature>
<feature type="region of interest" description="Disordered" evidence="4">
    <location>
        <begin position="482"/>
        <end position="505"/>
    </location>
</feature>
<feature type="compositionally biased region" description="Polar residues" evidence="4">
    <location>
        <begin position="1"/>
        <end position="10"/>
    </location>
</feature>
<feature type="compositionally biased region" description="Polar residues" evidence="4">
    <location>
        <begin position="43"/>
        <end position="61"/>
    </location>
</feature>
<feature type="compositionally biased region" description="Basic and acidic residues" evidence="4">
    <location>
        <begin position="496"/>
        <end position="505"/>
    </location>
</feature>
<feature type="mutagenesis site" description="No effect on interaction with EB1; when associated with K-755 missing." evidence="6">
    <location>
        <begin position="1"/>
        <end position="308"/>
    </location>
</feature>
<feature type="mutagenesis site" description="No effect on interaction with EB1; when associated with 1-M--D-308 missing." evidence="6">
    <location>
        <position position="755"/>
    </location>
</feature>
<keyword id="KW-0472">Membrane</keyword>
<keyword id="KW-0539">Nucleus</keyword>
<keyword id="KW-0677">Repeat</keyword>
<keyword id="KW-0690">Ribosome biogenesis</keyword>
<keyword id="KW-0698">rRNA processing</keyword>
<keyword id="KW-0853">WD repeat</keyword>
<proteinExistence type="evidence at protein level"/>
<name>BOP1_GIAIN</name>